<geneLocation type="plasmid">
    <name>pBTs1</name>
</geneLocation>
<sequence>MEKRIANIIYSSRWLMFPVYIGLAFGFVLLTVKFFQQIICVIPEILTMSESGLVLIVLSLIDIALVGGLLVMVMFSGYENFIAKMETTENKKRLSWMGTMDVNSIKNKVASSIVAISSVHLLRLFMDADKISDNKIMWCVVIHLTFVLSAFGMAYIDKMSKKHYS</sequence>
<protein>
    <recommendedName>
        <fullName>UPF0114 protein in repA1-repA2 intergenic region</fullName>
    </recommendedName>
</protein>
<dbReference type="EMBL" id="Y11966">
    <property type="protein sequence ID" value="CAA72699.1"/>
    <property type="molecule type" value="Genomic_DNA"/>
</dbReference>
<dbReference type="GO" id="GO:0005886">
    <property type="term" value="C:plasma membrane"/>
    <property type="evidence" value="ECO:0007669"/>
    <property type="project" value="UniProtKB-SubCell"/>
</dbReference>
<dbReference type="HAMAP" id="MF_00143">
    <property type="entry name" value="UPF0114"/>
    <property type="match status" value="1"/>
</dbReference>
<dbReference type="InterPro" id="IPR005134">
    <property type="entry name" value="UPF0114"/>
</dbReference>
<dbReference type="InterPro" id="IPR020761">
    <property type="entry name" value="UPF0114_bac"/>
</dbReference>
<dbReference type="NCBIfam" id="TIGR00645">
    <property type="entry name" value="HI0507"/>
    <property type="match status" value="1"/>
</dbReference>
<dbReference type="PANTHER" id="PTHR38596">
    <property type="entry name" value="UPF0114 PROTEIN YQHA"/>
    <property type="match status" value="1"/>
</dbReference>
<dbReference type="PANTHER" id="PTHR38596:SF1">
    <property type="entry name" value="UPF0114 PROTEIN YQHA"/>
    <property type="match status" value="1"/>
</dbReference>
<dbReference type="Pfam" id="PF03350">
    <property type="entry name" value="UPF0114"/>
    <property type="match status" value="1"/>
</dbReference>
<evidence type="ECO:0000255" key="1"/>
<evidence type="ECO:0000305" key="2"/>
<organism>
    <name type="scientific">Buchnera aphidicola subsp. Thelaxes suberi</name>
    <dbReference type="NCBI Taxonomy" id="98797"/>
    <lineage>
        <taxon>Bacteria</taxon>
        <taxon>Pseudomonadati</taxon>
        <taxon>Pseudomonadota</taxon>
        <taxon>Gammaproteobacteria</taxon>
        <taxon>Enterobacterales</taxon>
        <taxon>Erwiniaceae</taxon>
        <taxon>Buchnera</taxon>
    </lineage>
</organism>
<feature type="chain" id="PRO_0000214390" description="UPF0114 protein in repA1-repA2 intergenic region">
    <location>
        <begin position="1"/>
        <end position="165"/>
    </location>
</feature>
<feature type="transmembrane region" description="Helical" evidence="1">
    <location>
        <begin position="15"/>
        <end position="35"/>
    </location>
</feature>
<feature type="transmembrane region" description="Helical" evidence="1">
    <location>
        <begin position="53"/>
        <end position="73"/>
    </location>
</feature>
<feature type="transmembrane region" description="Helical" evidence="1">
    <location>
        <begin position="136"/>
        <end position="156"/>
    </location>
</feature>
<proteinExistence type="inferred from homology"/>
<reference key="1">
    <citation type="journal article" date="1997" name="J. Bacteriol.">
        <title>Putative evolutionary origin of plasmids carrying the genes involved in leucine biosynthesis in Buchnera aphidicola (endosymbiont of aphids).</title>
        <authorList>
            <person name="van Ham R.C.H.J."/>
            <person name="Moya A."/>
            <person name="Latorre A."/>
        </authorList>
    </citation>
    <scope>NUCLEOTIDE SEQUENCE [GENOMIC DNA]</scope>
</reference>
<accession>O31289</accession>
<keyword id="KW-1003">Cell membrane</keyword>
<keyword id="KW-0472">Membrane</keyword>
<keyword id="KW-0614">Plasmid</keyword>
<keyword id="KW-0812">Transmembrane</keyword>
<keyword id="KW-1133">Transmembrane helix</keyword>
<comment type="subcellular location">
    <subcellularLocation>
        <location evidence="2">Cell membrane</location>
        <topology evidence="2">Multi-pass membrane protein</topology>
    </subcellularLocation>
</comment>
<comment type="similarity">
    <text evidence="2">Belongs to the UPF0114 family.</text>
</comment>
<name>YREP_BUCTS</name>